<protein>
    <recommendedName>
        <fullName>Protein M2-2</fullName>
    </recommendedName>
</protein>
<name>M22_HRSVB</name>
<comment type="function">
    <text evidence="1">Mediates the regulatory switch from transcription to RNA replication. Acts late in infection by inhibiting viral transcription and up-regulating RNA replication. Inhibition of transcription by protein M2-2 requires phosphorylation of the phosphoprotein.</text>
</comment>
<comment type="subcellular location">
    <subcellularLocation>
        <location evidence="1">Host cytoplasm</location>
    </subcellularLocation>
</comment>
<comment type="similarity">
    <text evidence="2">Belongs to the orthopneumovirus M2-2 protein family.</text>
</comment>
<feature type="chain" id="PRO_0000365794" description="Protein M2-2">
    <location>
        <begin position="1"/>
        <end position="90"/>
    </location>
</feature>
<sequence>MTKPKIMILPDKYPCSISSILISSESMIATFNHKNILQFNHNHLDNHQRLLNNIFDEIHWTPKNLLDATQQFLQHLNIPEDIYTIYILVS</sequence>
<keyword id="KW-1035">Host cytoplasm</keyword>
<keyword id="KW-1185">Reference proteome</keyword>
<keyword id="KW-0693">Viral RNA replication</keyword>
<proteinExistence type="inferred from homology"/>
<evidence type="ECO:0000250" key="1">
    <source>
        <dbReference type="UniProtKB" id="P88812"/>
    </source>
</evidence>
<evidence type="ECO:0000305" key="2"/>
<gene>
    <name type="primary">M2-2</name>
</gene>
<accession>O42047</accession>
<reference key="1">
    <citation type="journal article" date="1997" name="Proc. Natl. Acad. Sci. U.S.A.">
        <title>Respiratory syncytial virus (RSV) SH and G proteins are not essential for viral replication in vitro: clinical evaluation and molecular characterization of a cold-passaged, attenuated RSV subgroup B mutant.</title>
        <authorList>
            <person name="Karron R.A."/>
            <person name="Buonagurio D.A."/>
            <person name="Georgiu A.F."/>
            <person name="Whitehead S.S."/>
            <person name="Adamus J.E."/>
            <person name="Clements-Mann M.L."/>
            <person name="Harris D.O."/>
            <person name="Randolph V.B."/>
            <person name="Udem S.A."/>
            <person name="Murphy B.R."/>
            <person name="Sidhu M.S."/>
        </authorList>
    </citation>
    <scope>NUCLEOTIDE SEQUENCE [GENOMIC RNA]</scope>
</reference>
<dbReference type="EMBL" id="AF013254">
    <property type="protein sequence ID" value="AAB82438.1"/>
    <property type="molecule type" value="Genomic_RNA"/>
</dbReference>
<dbReference type="EMBL" id="AF013255">
    <property type="protein sequence ID" value="AAB82448.1"/>
    <property type="molecule type" value="Genomic_RNA"/>
</dbReference>
<dbReference type="RefSeq" id="NP_056865.1">
    <property type="nucleotide sequence ID" value="NC_001781.1"/>
</dbReference>
<dbReference type="Proteomes" id="UP000002472">
    <property type="component" value="Segment"/>
</dbReference>
<dbReference type="Proteomes" id="UP000180717">
    <property type="component" value="Genome"/>
</dbReference>
<dbReference type="GO" id="GO:0030430">
    <property type="term" value="C:host cell cytoplasm"/>
    <property type="evidence" value="ECO:0007669"/>
    <property type="project" value="UniProtKB-SubCell"/>
</dbReference>
<dbReference type="InterPro" id="IPR009969">
    <property type="entry name" value="Pneumo_M2-2"/>
</dbReference>
<dbReference type="Pfam" id="PF07380">
    <property type="entry name" value="Pneumo_M2"/>
    <property type="match status" value="1"/>
</dbReference>
<organism>
    <name type="scientific">Human respiratory syncytial virus B (strain B1)</name>
    <dbReference type="NCBI Taxonomy" id="79692"/>
    <lineage>
        <taxon>Viruses</taxon>
        <taxon>Riboviria</taxon>
        <taxon>Orthornavirae</taxon>
        <taxon>Negarnaviricota</taxon>
        <taxon>Haploviricotina</taxon>
        <taxon>Monjiviricetes</taxon>
        <taxon>Mononegavirales</taxon>
        <taxon>Pneumoviridae</taxon>
        <taxon>Orthopneumovirus</taxon>
        <taxon>Orthopneumovirus hominis</taxon>
    </lineage>
</organism>
<organismHost>
    <name type="scientific">Homo sapiens</name>
    <name type="common">Human</name>
    <dbReference type="NCBI Taxonomy" id="9606"/>
</organismHost>